<reference key="1">
    <citation type="journal article" date="2000" name="Science">
        <title>Complete genome sequence of Neisseria meningitidis serogroup B strain MC58.</title>
        <authorList>
            <person name="Tettelin H."/>
            <person name="Saunders N.J."/>
            <person name="Heidelberg J.F."/>
            <person name="Jeffries A.C."/>
            <person name="Nelson K.E."/>
            <person name="Eisen J.A."/>
            <person name="Ketchum K.A."/>
            <person name="Hood D.W."/>
            <person name="Peden J.F."/>
            <person name="Dodson R.J."/>
            <person name="Nelson W.C."/>
            <person name="Gwinn M.L."/>
            <person name="DeBoy R.T."/>
            <person name="Peterson J.D."/>
            <person name="Hickey E.K."/>
            <person name="Haft D.H."/>
            <person name="Salzberg S.L."/>
            <person name="White O."/>
            <person name="Fleischmann R.D."/>
            <person name="Dougherty B.A."/>
            <person name="Mason T.M."/>
            <person name="Ciecko A."/>
            <person name="Parksey D.S."/>
            <person name="Blair E."/>
            <person name="Cittone H."/>
            <person name="Clark E.B."/>
            <person name="Cotton M.D."/>
            <person name="Utterback T.R."/>
            <person name="Khouri H.M."/>
            <person name="Qin H."/>
            <person name="Vamathevan J.J."/>
            <person name="Gill J."/>
            <person name="Scarlato V."/>
            <person name="Masignani V."/>
            <person name="Pizza M."/>
            <person name="Grandi G."/>
            <person name="Sun L."/>
            <person name="Smith H.O."/>
            <person name="Fraser C.M."/>
            <person name="Moxon E.R."/>
            <person name="Rappuoli R."/>
            <person name="Venter J.C."/>
        </authorList>
    </citation>
    <scope>NUCLEOTIDE SEQUENCE [LARGE SCALE GENOMIC DNA]</scope>
    <source>
        <strain>ATCC BAA-335 / MC58</strain>
    </source>
</reference>
<organism>
    <name type="scientific">Neisseria meningitidis serogroup B (strain ATCC BAA-335 / MC58)</name>
    <dbReference type="NCBI Taxonomy" id="122586"/>
    <lineage>
        <taxon>Bacteria</taxon>
        <taxon>Pseudomonadati</taxon>
        <taxon>Pseudomonadota</taxon>
        <taxon>Betaproteobacteria</taxon>
        <taxon>Neisseriales</taxon>
        <taxon>Neisseriaceae</taxon>
        <taxon>Neisseria</taxon>
    </lineage>
</organism>
<keyword id="KW-0028">Amino-acid biosynthesis</keyword>
<keyword id="KW-0963">Cytoplasm</keyword>
<keyword id="KW-0315">Glutamine amidotransferase</keyword>
<keyword id="KW-0368">Histidine biosynthesis</keyword>
<keyword id="KW-0378">Hydrolase</keyword>
<keyword id="KW-0456">Lyase</keyword>
<keyword id="KW-1185">Reference proteome</keyword>
<proteinExistence type="inferred from homology"/>
<sequence length="212" mass="23773">MQTAIIDYGMGNLHSVLKSVRTAGQLAGKNTEIFLSGDPDRVSRADKVIFPGQGAMPDCMAALKRDGLDEAVKDALKNKPFFGICVGAQLLFDHSEEGNTDGLGWFGGKVRRFERDLRDPQGCRLKVPHMGWNTVRQTQNHPLFKDIPQDTRFYFVHSYYFAPENPETILGESDYPSPFACIVGKDNVFATQFHTEKSHDAGLTMLKNFLNW</sequence>
<protein>
    <recommendedName>
        <fullName>Imidazole glycerol phosphate synthase subunit HisH</fullName>
        <ecNumber>4.3.2.10</ecNumber>
    </recommendedName>
    <alternativeName>
        <fullName>IGP synthase glutaminase subunit</fullName>
        <ecNumber>3.5.1.2</ecNumber>
    </alternativeName>
    <alternativeName>
        <fullName>IGP synthase subunit HisH</fullName>
    </alternativeName>
    <alternativeName>
        <fullName>ImGP synthase subunit HisH</fullName>
        <shortName>IGPS subunit HisH</shortName>
    </alternativeName>
</protein>
<accession>Q9K0H2</accession>
<comment type="function">
    <text evidence="1">IGPS catalyzes the conversion of PRFAR and glutamine to IGP, AICAR and glutamate. The HisH subunit catalyzes the hydrolysis of glutamine to glutamate and ammonia as part of the synthesis of IGP and AICAR. The resulting ammonia molecule is channeled to the active site of HisF (By similarity).</text>
</comment>
<comment type="catalytic activity">
    <reaction>
        <text>5-[(5-phospho-1-deoxy-D-ribulos-1-ylimino)methylamino]-1-(5-phospho-beta-D-ribosyl)imidazole-4-carboxamide + L-glutamine = D-erythro-1-(imidazol-4-yl)glycerol 3-phosphate + 5-amino-1-(5-phospho-beta-D-ribosyl)imidazole-4-carboxamide + L-glutamate + H(+)</text>
        <dbReference type="Rhea" id="RHEA:24793"/>
        <dbReference type="ChEBI" id="CHEBI:15378"/>
        <dbReference type="ChEBI" id="CHEBI:29985"/>
        <dbReference type="ChEBI" id="CHEBI:58278"/>
        <dbReference type="ChEBI" id="CHEBI:58359"/>
        <dbReference type="ChEBI" id="CHEBI:58475"/>
        <dbReference type="ChEBI" id="CHEBI:58525"/>
        <dbReference type="EC" id="4.3.2.10"/>
    </reaction>
</comment>
<comment type="catalytic activity">
    <reaction>
        <text>L-glutamine + H2O = L-glutamate + NH4(+)</text>
        <dbReference type="Rhea" id="RHEA:15889"/>
        <dbReference type="ChEBI" id="CHEBI:15377"/>
        <dbReference type="ChEBI" id="CHEBI:28938"/>
        <dbReference type="ChEBI" id="CHEBI:29985"/>
        <dbReference type="ChEBI" id="CHEBI:58359"/>
        <dbReference type="EC" id="3.5.1.2"/>
    </reaction>
</comment>
<comment type="pathway">
    <text>Amino-acid biosynthesis; L-histidine biosynthesis; L-histidine from 5-phospho-alpha-D-ribose 1-diphosphate: step 5/9.</text>
</comment>
<comment type="subunit">
    <text evidence="1">Heterodimer of HisH and HisF.</text>
</comment>
<comment type="subcellular location">
    <subcellularLocation>
        <location evidence="1">Cytoplasm</location>
    </subcellularLocation>
</comment>
<feature type="chain" id="PRO_0000152398" description="Imidazole glycerol phosphate synthase subunit HisH">
    <location>
        <begin position="1"/>
        <end position="212"/>
    </location>
</feature>
<feature type="domain" description="Glutamine amidotransferase type-1">
    <location>
        <begin position="2"/>
        <end position="212"/>
    </location>
</feature>
<feature type="active site" description="Nucleophile" evidence="1">
    <location>
        <position position="85"/>
    </location>
</feature>
<feature type="active site" evidence="1">
    <location>
        <position position="194"/>
    </location>
</feature>
<feature type="active site" evidence="1">
    <location>
        <position position="196"/>
    </location>
</feature>
<gene>
    <name type="primary">hisH</name>
    <name type="ordered locus">NMB0630</name>
</gene>
<dbReference type="EC" id="4.3.2.10"/>
<dbReference type="EC" id="3.5.1.2"/>
<dbReference type="EMBL" id="AE002098">
    <property type="protein sequence ID" value="AAF41055.1"/>
    <property type="molecule type" value="Genomic_DNA"/>
</dbReference>
<dbReference type="PIR" id="B81177">
    <property type="entry name" value="B81177"/>
</dbReference>
<dbReference type="RefSeq" id="NP_273673.1">
    <property type="nucleotide sequence ID" value="NC_003112.2"/>
</dbReference>
<dbReference type="RefSeq" id="WP_002225527.1">
    <property type="nucleotide sequence ID" value="NC_003112.2"/>
</dbReference>
<dbReference type="SMR" id="Q9K0H2"/>
<dbReference type="FunCoup" id="Q9K0H2">
    <property type="interactions" value="277"/>
</dbReference>
<dbReference type="STRING" id="122586.NMB0630"/>
<dbReference type="PaxDb" id="122586-NMB0630"/>
<dbReference type="KEGG" id="nme:NMB0630"/>
<dbReference type="PATRIC" id="fig|122586.8.peg.798"/>
<dbReference type="HOGENOM" id="CLU_071837_2_0_4"/>
<dbReference type="InParanoid" id="Q9K0H2"/>
<dbReference type="OrthoDB" id="9807137at2"/>
<dbReference type="UniPathway" id="UPA00031">
    <property type="reaction ID" value="UER00010"/>
</dbReference>
<dbReference type="Proteomes" id="UP000000425">
    <property type="component" value="Chromosome"/>
</dbReference>
<dbReference type="GO" id="GO:0005737">
    <property type="term" value="C:cytoplasm"/>
    <property type="evidence" value="ECO:0007669"/>
    <property type="project" value="UniProtKB-SubCell"/>
</dbReference>
<dbReference type="GO" id="GO:0004359">
    <property type="term" value="F:glutaminase activity"/>
    <property type="evidence" value="ECO:0007669"/>
    <property type="project" value="UniProtKB-EC"/>
</dbReference>
<dbReference type="GO" id="GO:0000107">
    <property type="term" value="F:imidazoleglycerol-phosphate synthase activity"/>
    <property type="evidence" value="ECO:0000318"/>
    <property type="project" value="GO_Central"/>
</dbReference>
<dbReference type="GO" id="GO:0016829">
    <property type="term" value="F:lyase activity"/>
    <property type="evidence" value="ECO:0007669"/>
    <property type="project" value="UniProtKB-KW"/>
</dbReference>
<dbReference type="GO" id="GO:0000105">
    <property type="term" value="P:L-histidine biosynthetic process"/>
    <property type="evidence" value="ECO:0007669"/>
    <property type="project" value="UniProtKB-UniRule"/>
</dbReference>
<dbReference type="CDD" id="cd01748">
    <property type="entry name" value="GATase1_IGP_Synthase"/>
    <property type="match status" value="1"/>
</dbReference>
<dbReference type="FunFam" id="3.40.50.880:FF:000023">
    <property type="entry name" value="Imidazole glycerol phosphate synthase subunit HisH"/>
    <property type="match status" value="1"/>
</dbReference>
<dbReference type="Gene3D" id="3.40.50.880">
    <property type="match status" value="1"/>
</dbReference>
<dbReference type="HAMAP" id="MF_00278">
    <property type="entry name" value="HisH"/>
    <property type="match status" value="1"/>
</dbReference>
<dbReference type="InterPro" id="IPR029062">
    <property type="entry name" value="Class_I_gatase-like"/>
</dbReference>
<dbReference type="InterPro" id="IPR017926">
    <property type="entry name" value="GATASE"/>
</dbReference>
<dbReference type="InterPro" id="IPR010139">
    <property type="entry name" value="Imidazole-glycPsynth_HisH"/>
</dbReference>
<dbReference type="NCBIfam" id="TIGR01855">
    <property type="entry name" value="IMP_synth_hisH"/>
    <property type="match status" value="1"/>
</dbReference>
<dbReference type="PANTHER" id="PTHR42701">
    <property type="entry name" value="IMIDAZOLE GLYCEROL PHOSPHATE SYNTHASE SUBUNIT HISH"/>
    <property type="match status" value="1"/>
</dbReference>
<dbReference type="PANTHER" id="PTHR42701:SF2">
    <property type="entry name" value="IMIDAZOLE GLYCEROL PHOSPHATE SYNTHASE SUBUNIT HISH 1"/>
    <property type="match status" value="1"/>
</dbReference>
<dbReference type="Pfam" id="PF00117">
    <property type="entry name" value="GATase"/>
    <property type="match status" value="1"/>
</dbReference>
<dbReference type="PIRSF" id="PIRSF000495">
    <property type="entry name" value="Amidotransf_hisH"/>
    <property type="match status" value="1"/>
</dbReference>
<dbReference type="SUPFAM" id="SSF52317">
    <property type="entry name" value="Class I glutamine amidotransferase-like"/>
    <property type="match status" value="1"/>
</dbReference>
<dbReference type="PROSITE" id="PS51273">
    <property type="entry name" value="GATASE_TYPE_1"/>
    <property type="match status" value="1"/>
</dbReference>
<name>HIS5_NEIMB</name>
<evidence type="ECO:0000250" key="1"/>